<accession>P39374</accession>
<accession>Q2M5Y8</accession>
<dbReference type="EMBL" id="U14003">
    <property type="protein sequence ID" value="AAA97221.1"/>
    <property type="molecule type" value="Genomic_DNA"/>
</dbReference>
<dbReference type="EMBL" id="U00096">
    <property type="protein sequence ID" value="AAC77281.1"/>
    <property type="molecule type" value="Genomic_DNA"/>
</dbReference>
<dbReference type="EMBL" id="AP009048">
    <property type="protein sequence ID" value="BAE78318.1"/>
    <property type="molecule type" value="Genomic_DNA"/>
</dbReference>
<dbReference type="PIR" id="S56550">
    <property type="entry name" value="S56550"/>
</dbReference>
<dbReference type="RefSeq" id="NP_418745.3">
    <property type="nucleotide sequence ID" value="NC_000913.3"/>
</dbReference>
<dbReference type="RefSeq" id="WP_000062552.1">
    <property type="nucleotide sequence ID" value="NZ_SSUV01000012.1"/>
</dbReference>
<dbReference type="BioGRID" id="4261001">
    <property type="interactions" value="11"/>
</dbReference>
<dbReference type="DIP" id="DIP-12631N"/>
<dbReference type="FunCoup" id="P39374">
    <property type="interactions" value="68"/>
</dbReference>
<dbReference type="IntAct" id="P39374">
    <property type="interactions" value="1"/>
</dbReference>
<dbReference type="STRING" id="511145.b4325"/>
<dbReference type="PaxDb" id="511145-b4325"/>
<dbReference type="EnsemblBacteria" id="AAC77281">
    <property type="protein sequence ID" value="AAC77281"/>
    <property type="gene ID" value="b4325"/>
</dbReference>
<dbReference type="GeneID" id="948850"/>
<dbReference type="KEGG" id="ecj:JW4288"/>
<dbReference type="KEGG" id="eco:b4325"/>
<dbReference type="KEGG" id="ecoc:C3026_23370"/>
<dbReference type="PATRIC" id="fig|511145.12.peg.4467"/>
<dbReference type="EchoBASE" id="EB2452"/>
<dbReference type="eggNOG" id="ENOG5033TP9">
    <property type="taxonomic scope" value="Bacteria"/>
</dbReference>
<dbReference type="HOGENOM" id="CLU_087885_0_0_6"/>
<dbReference type="InParanoid" id="P39374"/>
<dbReference type="OMA" id="KHERGRM"/>
<dbReference type="OrthoDB" id="9920988at2"/>
<dbReference type="BioCyc" id="EcoCyc:G7922-MONOMER"/>
<dbReference type="PRO" id="PR:P39374"/>
<dbReference type="Proteomes" id="UP000000625">
    <property type="component" value="Chromosome"/>
</dbReference>
<dbReference type="InterPro" id="IPR021220">
    <property type="entry name" value="DUF2686"/>
</dbReference>
<dbReference type="Pfam" id="PF10887">
    <property type="entry name" value="DUF2686"/>
    <property type="match status" value="1"/>
</dbReference>
<name>YJIC_ECOLI</name>
<reference key="1">
    <citation type="journal article" date="1995" name="Nucleic Acids Res.">
        <title>Analysis of the Escherichia coli genome VI: DNA sequence of the region from 92.8 through 100 minutes.</title>
        <authorList>
            <person name="Burland V.D."/>
            <person name="Plunkett G. III"/>
            <person name="Sofia H.J."/>
            <person name="Daniels D.L."/>
            <person name="Blattner F.R."/>
        </authorList>
    </citation>
    <scope>NUCLEOTIDE SEQUENCE [LARGE SCALE GENOMIC DNA]</scope>
    <source>
        <strain>K12 / MG1655 / ATCC 47076</strain>
    </source>
</reference>
<reference key="2">
    <citation type="journal article" date="1997" name="Science">
        <title>The complete genome sequence of Escherichia coli K-12.</title>
        <authorList>
            <person name="Blattner F.R."/>
            <person name="Plunkett G. III"/>
            <person name="Bloch C.A."/>
            <person name="Perna N.T."/>
            <person name="Burland V."/>
            <person name="Riley M."/>
            <person name="Collado-Vides J."/>
            <person name="Glasner J.D."/>
            <person name="Rode C.K."/>
            <person name="Mayhew G.F."/>
            <person name="Gregor J."/>
            <person name="Davis N.W."/>
            <person name="Kirkpatrick H.A."/>
            <person name="Goeden M.A."/>
            <person name="Rose D.J."/>
            <person name="Mau B."/>
            <person name="Shao Y."/>
        </authorList>
    </citation>
    <scope>NUCLEOTIDE SEQUENCE [LARGE SCALE GENOMIC DNA]</scope>
    <source>
        <strain>K12 / MG1655 / ATCC 47076</strain>
    </source>
</reference>
<reference key="3">
    <citation type="journal article" date="2006" name="Mol. Syst. Biol.">
        <title>Highly accurate genome sequences of Escherichia coli K-12 strains MG1655 and W3110.</title>
        <authorList>
            <person name="Hayashi K."/>
            <person name="Morooka N."/>
            <person name="Yamamoto Y."/>
            <person name="Fujita K."/>
            <person name="Isono K."/>
            <person name="Choi S."/>
            <person name="Ohtsubo E."/>
            <person name="Baba T."/>
            <person name="Wanner B.L."/>
            <person name="Mori H."/>
            <person name="Horiuchi T."/>
        </authorList>
    </citation>
    <scope>NUCLEOTIDE SEQUENCE [LARGE SCALE GENOMIC DNA]</scope>
    <source>
        <strain>K12 / W3110 / ATCC 27325 / DSM 5911</strain>
    </source>
</reference>
<sequence length="276" mass="30593">MSMPLSNALQSQIITDAHFLHHPIVDSEFTRKLKYARMDSENIYLPPLTRGNNHNYDGKSVVEIRKLDISKEPWPFNYVTGACRESDGITTTGRMLYRNLKITSALDEIYGGICKKAHATTELAEGLRLNLFMKSPFDPVEDYTVHEITLGPGCNVPGYAGTTIGYISTLPASQAKRWTNEQPRIDIYIDQIMTVTGVANSSGFALAALLNANIELGNDPIIGIEAYPGTAEIHAKMGYKVIPGDENAPLKRMTLQPSSLPELFELKNGEWNYIGK</sequence>
<comment type="similarity">
    <text evidence="1">To E.coli YjfZ.</text>
</comment>
<proteinExistence type="predicted"/>
<keyword id="KW-1185">Reference proteome</keyword>
<evidence type="ECO:0000305" key="1"/>
<protein>
    <recommendedName>
        <fullName>Uncharacterized protein YjiC</fullName>
    </recommendedName>
</protein>
<organism>
    <name type="scientific">Escherichia coli (strain K12)</name>
    <dbReference type="NCBI Taxonomy" id="83333"/>
    <lineage>
        <taxon>Bacteria</taxon>
        <taxon>Pseudomonadati</taxon>
        <taxon>Pseudomonadota</taxon>
        <taxon>Gammaproteobacteria</taxon>
        <taxon>Enterobacterales</taxon>
        <taxon>Enterobacteriaceae</taxon>
        <taxon>Escherichia</taxon>
    </lineage>
</organism>
<feature type="chain" id="PRO_0000169786" description="Uncharacterized protein YjiC">
    <location>
        <begin position="1"/>
        <end position="276"/>
    </location>
</feature>
<gene>
    <name type="primary">yjiC</name>
    <name type="ordered locus">b4325</name>
    <name type="ordered locus">JW4288</name>
</gene>